<keyword id="KW-1185">Reference proteome</keyword>
<protein>
    <recommendedName>
        <fullName>RIIa domain-containing protein 1</fullName>
    </recommendedName>
</protein>
<gene>
    <name type="primary">RIIAD1</name>
</gene>
<organism>
    <name type="scientific">Bos taurus</name>
    <name type="common">Bovine</name>
    <dbReference type="NCBI Taxonomy" id="9913"/>
    <lineage>
        <taxon>Eukaryota</taxon>
        <taxon>Metazoa</taxon>
        <taxon>Chordata</taxon>
        <taxon>Craniata</taxon>
        <taxon>Vertebrata</taxon>
        <taxon>Euteleostomi</taxon>
        <taxon>Mammalia</taxon>
        <taxon>Eutheria</taxon>
        <taxon>Laurasiatheria</taxon>
        <taxon>Artiodactyla</taxon>
        <taxon>Ruminantia</taxon>
        <taxon>Pecora</taxon>
        <taxon>Bovidae</taxon>
        <taxon>Bovinae</taxon>
        <taxon>Bos</taxon>
    </lineage>
</organism>
<name>RIAD1_BOVIN</name>
<proteinExistence type="predicted"/>
<accession>Q32PB2</accession>
<dbReference type="EMBL" id="BC108187">
    <property type="protein sequence ID" value="AAI08188.1"/>
    <property type="molecule type" value="mRNA"/>
</dbReference>
<dbReference type="RefSeq" id="NP_001070517.1">
    <property type="nucleotide sequence ID" value="NM_001077049.1"/>
</dbReference>
<dbReference type="SMR" id="Q32PB2"/>
<dbReference type="FunCoup" id="Q32PB2">
    <property type="interactions" value="128"/>
</dbReference>
<dbReference type="PaxDb" id="9913-ENSBTAP00000043780"/>
<dbReference type="Ensembl" id="ENSBTAT00000046481.3">
    <property type="protein sequence ID" value="ENSBTAP00000090117.1"/>
    <property type="gene ID" value="ENSBTAG00000032733.3"/>
</dbReference>
<dbReference type="GeneID" id="767988"/>
<dbReference type="KEGG" id="bta:767988"/>
<dbReference type="CTD" id="284485"/>
<dbReference type="eggNOG" id="ENOG502S8ZF">
    <property type="taxonomic scope" value="Eukaryota"/>
</dbReference>
<dbReference type="GeneTree" id="ENSGT00390000003062"/>
<dbReference type="HOGENOM" id="CLU_144881_1_1_1"/>
<dbReference type="InParanoid" id="Q32PB2"/>
<dbReference type="OrthoDB" id="10249338at2759"/>
<dbReference type="TreeFam" id="TF328360"/>
<dbReference type="Proteomes" id="UP000009136">
    <property type="component" value="Chromosome 3"/>
</dbReference>
<dbReference type="CDD" id="cd22971">
    <property type="entry name" value="DD_RIIAD1"/>
    <property type="match status" value="1"/>
</dbReference>
<dbReference type="PANTHER" id="PTHR15505">
    <property type="entry name" value="RIIA DOMAIN-CONTAINING PROTEIN 1"/>
    <property type="match status" value="1"/>
</dbReference>
<dbReference type="PANTHER" id="PTHR15505:SF4">
    <property type="entry name" value="RIIA DOMAIN-CONTAINING PROTEIN 1"/>
    <property type="match status" value="1"/>
</dbReference>
<dbReference type="SUPFAM" id="SSF47391">
    <property type="entry name" value="Dimerization-anchoring domain of cAMP-dependent PK regulatory subunit"/>
    <property type="match status" value="1"/>
</dbReference>
<feature type="chain" id="PRO_0000342466" description="RIIa domain-containing protein 1">
    <location>
        <begin position="1"/>
        <end position="92"/>
    </location>
</feature>
<feature type="domain" description="RIIa">
    <location>
        <begin position="43"/>
        <end position="77"/>
    </location>
</feature>
<reference key="1">
    <citation type="submission" date="2005-10" db="EMBL/GenBank/DDBJ databases">
        <authorList>
            <consortium name="NIH - Mammalian Gene Collection (MGC) project"/>
        </authorList>
    </citation>
    <scope>NUCLEOTIDE SEQUENCE [LARGE SCALE MRNA]</scope>
    <source>
        <strain>Crossbred X Angus</strain>
        <tissue>Liver</tissue>
    </source>
</reference>
<sequence>MANLTGTIKGLYPETLSPEQLEKLRGFKIQTRITNEKYLRTHKEVELLISGFFREMFLKRPDNIPEFAADYFTDPRLPNKIHMQLIKEKKAA</sequence>